<reference key="1">
    <citation type="journal article" date="2011" name="J. Bacteriol.">
        <title>Comparative genomics of 28 Salmonella enterica isolates: evidence for CRISPR-mediated adaptive sublineage evolution.</title>
        <authorList>
            <person name="Fricke W.F."/>
            <person name="Mammel M.K."/>
            <person name="McDermott P.F."/>
            <person name="Tartera C."/>
            <person name="White D.G."/>
            <person name="Leclerc J.E."/>
            <person name="Ravel J."/>
            <person name="Cebula T.A."/>
        </authorList>
    </citation>
    <scope>NUCLEOTIDE SEQUENCE [LARGE SCALE GENOMIC DNA]</scope>
    <source>
        <strain>CT_02021853</strain>
    </source>
</reference>
<protein>
    <recommendedName>
        <fullName evidence="1">Multidrug resistance protein MdtB</fullName>
    </recommendedName>
    <alternativeName>
        <fullName evidence="1">Multidrug transporter MdtB</fullName>
    </alternativeName>
</protein>
<feature type="chain" id="PRO_1000145658" description="Multidrug resistance protein MdtB">
    <location>
        <begin position="1"/>
        <end position="1040"/>
    </location>
</feature>
<feature type="transmembrane region" description="Helical" evidence="1">
    <location>
        <begin position="25"/>
        <end position="45"/>
    </location>
</feature>
<feature type="transmembrane region" description="Helical" evidence="1">
    <location>
        <begin position="347"/>
        <end position="367"/>
    </location>
</feature>
<feature type="transmembrane region" description="Helical" evidence="1">
    <location>
        <begin position="369"/>
        <end position="389"/>
    </location>
</feature>
<feature type="transmembrane region" description="Helical" evidence="1">
    <location>
        <begin position="396"/>
        <end position="416"/>
    </location>
</feature>
<feature type="transmembrane region" description="Helical" evidence="1">
    <location>
        <begin position="440"/>
        <end position="460"/>
    </location>
</feature>
<feature type="transmembrane region" description="Helical" evidence="1">
    <location>
        <begin position="472"/>
        <end position="492"/>
    </location>
</feature>
<feature type="transmembrane region" description="Helical" evidence="1">
    <location>
        <begin position="537"/>
        <end position="557"/>
    </location>
</feature>
<feature type="transmembrane region" description="Helical" evidence="1">
    <location>
        <begin position="863"/>
        <end position="883"/>
    </location>
</feature>
<feature type="transmembrane region" description="Helical" evidence="1">
    <location>
        <begin position="888"/>
        <end position="908"/>
    </location>
</feature>
<feature type="transmembrane region" description="Helical" evidence="1">
    <location>
        <begin position="910"/>
        <end position="930"/>
    </location>
</feature>
<feature type="transmembrane region" description="Helical" evidence="1">
    <location>
        <begin position="968"/>
        <end position="988"/>
    </location>
</feature>
<feature type="transmembrane region" description="Helical" evidence="1">
    <location>
        <begin position="998"/>
        <end position="1018"/>
    </location>
</feature>
<gene>
    <name evidence="1" type="primary">mdtB</name>
    <name type="ordered locus">SeD_A2473</name>
</gene>
<accession>B5FMU6</accession>
<proteinExistence type="inferred from homology"/>
<dbReference type="EMBL" id="CP001144">
    <property type="protein sequence ID" value="ACH76677.1"/>
    <property type="molecule type" value="Genomic_DNA"/>
</dbReference>
<dbReference type="RefSeq" id="WP_001197783.1">
    <property type="nucleotide sequence ID" value="NC_011205.1"/>
</dbReference>
<dbReference type="SMR" id="B5FMU6"/>
<dbReference type="KEGG" id="sed:SeD_A2473"/>
<dbReference type="HOGENOM" id="CLU_002755_1_1_6"/>
<dbReference type="Proteomes" id="UP000008322">
    <property type="component" value="Chromosome"/>
</dbReference>
<dbReference type="GO" id="GO:0005886">
    <property type="term" value="C:plasma membrane"/>
    <property type="evidence" value="ECO:0007669"/>
    <property type="project" value="UniProtKB-SubCell"/>
</dbReference>
<dbReference type="GO" id="GO:0042910">
    <property type="term" value="F:xenobiotic transmembrane transporter activity"/>
    <property type="evidence" value="ECO:0007669"/>
    <property type="project" value="TreeGrafter"/>
</dbReference>
<dbReference type="FunFam" id="1.20.1640.10:FF:000001">
    <property type="entry name" value="Efflux pump membrane transporter"/>
    <property type="match status" value="1"/>
</dbReference>
<dbReference type="FunFam" id="3.30.70.1430:FF:000001">
    <property type="entry name" value="Efflux pump membrane transporter"/>
    <property type="match status" value="1"/>
</dbReference>
<dbReference type="FunFam" id="3.30.2090.10:FF:000003">
    <property type="entry name" value="Multidrug resistance protein MdtB"/>
    <property type="match status" value="1"/>
</dbReference>
<dbReference type="Gene3D" id="3.30.70.1430">
    <property type="entry name" value="Multidrug efflux transporter AcrB pore domain"/>
    <property type="match status" value="2"/>
</dbReference>
<dbReference type="Gene3D" id="3.30.70.1440">
    <property type="entry name" value="Multidrug efflux transporter AcrB pore domain"/>
    <property type="match status" value="1"/>
</dbReference>
<dbReference type="Gene3D" id="3.30.70.1320">
    <property type="entry name" value="Multidrug efflux transporter AcrB pore domain like"/>
    <property type="match status" value="1"/>
</dbReference>
<dbReference type="Gene3D" id="3.30.2090.10">
    <property type="entry name" value="Multidrug efflux transporter AcrB TolC docking domain, DN and DC subdomains"/>
    <property type="match status" value="2"/>
</dbReference>
<dbReference type="Gene3D" id="1.20.1640.10">
    <property type="entry name" value="Multidrug efflux transporter AcrB transmembrane domain"/>
    <property type="match status" value="2"/>
</dbReference>
<dbReference type="HAMAP" id="MF_01423">
    <property type="entry name" value="MdtB"/>
    <property type="match status" value="1"/>
</dbReference>
<dbReference type="InterPro" id="IPR027463">
    <property type="entry name" value="AcrB_DN_DC_subdom"/>
</dbReference>
<dbReference type="InterPro" id="IPR001036">
    <property type="entry name" value="Acrflvin-R"/>
</dbReference>
<dbReference type="InterPro" id="IPR022831">
    <property type="entry name" value="Multidrug-R_MdtB"/>
</dbReference>
<dbReference type="NCBIfam" id="NF007798">
    <property type="entry name" value="PRK10503.1"/>
    <property type="match status" value="1"/>
</dbReference>
<dbReference type="NCBIfam" id="NF033617">
    <property type="entry name" value="RND_permease_2"/>
    <property type="match status" value="1"/>
</dbReference>
<dbReference type="PANTHER" id="PTHR32063">
    <property type="match status" value="1"/>
</dbReference>
<dbReference type="PANTHER" id="PTHR32063:SF21">
    <property type="entry name" value="MULTIDRUG RESISTANCE PROTEIN MDTB"/>
    <property type="match status" value="1"/>
</dbReference>
<dbReference type="Pfam" id="PF00873">
    <property type="entry name" value="ACR_tran"/>
    <property type="match status" value="1"/>
</dbReference>
<dbReference type="PRINTS" id="PR00702">
    <property type="entry name" value="ACRIFLAVINRP"/>
</dbReference>
<dbReference type="SUPFAM" id="SSF82693">
    <property type="entry name" value="Multidrug efflux transporter AcrB pore domain, PN1, PN2, PC1 and PC2 subdomains"/>
    <property type="match status" value="3"/>
</dbReference>
<dbReference type="SUPFAM" id="SSF82714">
    <property type="entry name" value="Multidrug efflux transporter AcrB TolC docking domain, DN and DC subdomains"/>
    <property type="match status" value="2"/>
</dbReference>
<dbReference type="SUPFAM" id="SSF82866">
    <property type="entry name" value="Multidrug efflux transporter AcrB transmembrane domain"/>
    <property type="match status" value="2"/>
</dbReference>
<comment type="subunit">
    <text evidence="1">Part of a tripartite efflux system composed of MdtA, MdtB and MdtC. MdtB forms a heteromultimer with MdtC.</text>
</comment>
<comment type="subcellular location">
    <subcellularLocation>
        <location evidence="1">Cell inner membrane</location>
        <topology evidence="1">Multi-pass membrane protein</topology>
    </subcellularLocation>
</comment>
<comment type="similarity">
    <text evidence="1">Belongs to the resistance-nodulation-cell division (RND) (TC 2.A.6) family. MdtB subfamily.</text>
</comment>
<name>MDTB_SALDC</name>
<keyword id="KW-0997">Cell inner membrane</keyword>
<keyword id="KW-1003">Cell membrane</keyword>
<keyword id="KW-0472">Membrane</keyword>
<keyword id="KW-0812">Transmembrane</keyword>
<keyword id="KW-1133">Transmembrane helix</keyword>
<keyword id="KW-0813">Transport</keyword>
<evidence type="ECO:0000255" key="1">
    <source>
        <dbReference type="HAMAP-Rule" id="MF_01423"/>
    </source>
</evidence>
<organism>
    <name type="scientific">Salmonella dublin (strain CT_02021853)</name>
    <dbReference type="NCBI Taxonomy" id="439851"/>
    <lineage>
        <taxon>Bacteria</taxon>
        <taxon>Pseudomonadati</taxon>
        <taxon>Pseudomonadota</taxon>
        <taxon>Gammaproteobacteria</taxon>
        <taxon>Enterobacterales</taxon>
        <taxon>Enterobacteriaceae</taxon>
        <taxon>Salmonella</taxon>
    </lineage>
</organism>
<sequence length="1040" mass="111809">MQVLPPGSTGGPSRLFILRPVATTLLMAAILLAGIIGYRFLPVAALPEVDYPTIQVVTLYPGASPDVMTSAVTAPLERQFGQMSGLKQMSSQSSGGASVVTLQFQLTLPLDVAEQEVQAAINAATNLLPSDLPNPPIYSKVNPADPPIMTLAVTSNAMPMTQVEDMVETRVAQKISQVSGVGLVTLAGGQRPAVRVKLNAQAIAALGLTSETVRTAITGANVNSAKGSLDGPERAVTLSANDQMQSADEYRKLIIAYQNGAPVRLGDVATVEQGAENSWLGAWANQAPAIVMNVQRQPGANIIATADSIRQMLPQLTESLPKSVKVTVLSDRTTNIRASVRDTQFELMLAIALVVMIIYLFLRNIPATIIPGVAVPLSLIGTFAVMVFLDFSINNLTLMALTIATGFVVDDAIVVIENISRYIEKGEKPLAAALKGAGEIGFTIISLTFSLIAVLIPLLFMGDIVGRLFREFAVTLAVAILISAVVSLTLTPMMCARMLSQQSLRKQNRFSRACERMFDRVIASYGRGLAKVLNHPWLTLSVAFATLLLSVMLWIVIPKGFFPVQDNGIIQGTLQAPQSSSYASMAQRQRQVAERILQDPAVQSLTTFVGVDGANPTLNSARLQINLKPLDARDDRVQQVISRLQTAVATIPGVALYLQPTQDLTIDTQVSRTQYQFTLQATTLDALSHWVPKLQNALQSLPQLSEVSSDWQDRGLAAWVNVDRDSASRLGISMADVDNALYNAFGQRLISTIYTQANQYRVVLEHNTASTPGLAALETIRLTSRDGGTVPLSAIARIEQRFAPLSINHLDQFPVTTFSFNVPEGYSLGDAVQAILDTEKTLALPADITTQFQGSTLAFQAALGSTVWLIVAAVVAMYIVLGVLYESFIHPITILSTLPTAGVGALLALIIAGSELDIIAIIGIILLIGIVKKNAIMMIDFALAAEREQGMSPRDAIFQACLLRFRPILMTTLAALLGALPLMLSTGVGAELRRPLGIAMVGGLLVSQVLTLFTTPVIYLLFDRLSLYVKSRFPRHKEEA</sequence>